<organism>
    <name type="scientific">Lysinibacillus sphaericus (strain C3-41)</name>
    <dbReference type="NCBI Taxonomy" id="444177"/>
    <lineage>
        <taxon>Bacteria</taxon>
        <taxon>Bacillati</taxon>
        <taxon>Bacillota</taxon>
        <taxon>Bacilli</taxon>
        <taxon>Bacillales</taxon>
        <taxon>Bacillaceae</taxon>
        <taxon>Lysinibacillus</taxon>
    </lineage>
</organism>
<evidence type="ECO:0000255" key="1">
    <source>
        <dbReference type="HAMAP-Rule" id="MF_01554"/>
    </source>
</evidence>
<gene>
    <name evidence="1" type="primary">glmM</name>
    <name type="ordered locus">Bsph_4565</name>
</gene>
<comment type="function">
    <text evidence="1">Catalyzes the conversion of glucosamine-6-phosphate to glucosamine-1-phosphate.</text>
</comment>
<comment type="catalytic activity">
    <reaction evidence="1">
        <text>alpha-D-glucosamine 1-phosphate = D-glucosamine 6-phosphate</text>
        <dbReference type="Rhea" id="RHEA:23424"/>
        <dbReference type="ChEBI" id="CHEBI:58516"/>
        <dbReference type="ChEBI" id="CHEBI:58725"/>
        <dbReference type="EC" id="5.4.2.10"/>
    </reaction>
</comment>
<comment type="cofactor">
    <cofactor evidence="1">
        <name>Mg(2+)</name>
        <dbReference type="ChEBI" id="CHEBI:18420"/>
    </cofactor>
    <text evidence="1">Binds 1 Mg(2+) ion per subunit.</text>
</comment>
<comment type="PTM">
    <text evidence="1">Activated by phosphorylation.</text>
</comment>
<comment type="similarity">
    <text evidence="1">Belongs to the phosphohexose mutase family.</text>
</comment>
<dbReference type="EC" id="5.4.2.10" evidence="1"/>
<dbReference type="EMBL" id="CP000817">
    <property type="protein sequence ID" value="ACA42011.1"/>
    <property type="molecule type" value="Genomic_DNA"/>
</dbReference>
<dbReference type="RefSeq" id="WP_012296032.1">
    <property type="nucleotide sequence ID" value="NC_010382.1"/>
</dbReference>
<dbReference type="SMR" id="B1HMT3"/>
<dbReference type="EnsemblBacteria" id="ACA42011">
    <property type="protein sequence ID" value="ACA42011"/>
    <property type="gene ID" value="Bsph_4565"/>
</dbReference>
<dbReference type="KEGG" id="lsp:Bsph_4565"/>
<dbReference type="HOGENOM" id="CLU_016950_7_0_9"/>
<dbReference type="Proteomes" id="UP000002164">
    <property type="component" value="Chromosome"/>
</dbReference>
<dbReference type="GO" id="GO:0005829">
    <property type="term" value="C:cytosol"/>
    <property type="evidence" value="ECO:0007669"/>
    <property type="project" value="TreeGrafter"/>
</dbReference>
<dbReference type="GO" id="GO:0000287">
    <property type="term" value="F:magnesium ion binding"/>
    <property type="evidence" value="ECO:0007669"/>
    <property type="project" value="UniProtKB-UniRule"/>
</dbReference>
<dbReference type="GO" id="GO:0008966">
    <property type="term" value="F:phosphoglucosamine mutase activity"/>
    <property type="evidence" value="ECO:0007669"/>
    <property type="project" value="UniProtKB-UniRule"/>
</dbReference>
<dbReference type="GO" id="GO:0004615">
    <property type="term" value="F:phosphomannomutase activity"/>
    <property type="evidence" value="ECO:0007669"/>
    <property type="project" value="TreeGrafter"/>
</dbReference>
<dbReference type="GO" id="GO:0005975">
    <property type="term" value="P:carbohydrate metabolic process"/>
    <property type="evidence" value="ECO:0007669"/>
    <property type="project" value="InterPro"/>
</dbReference>
<dbReference type="GO" id="GO:0009252">
    <property type="term" value="P:peptidoglycan biosynthetic process"/>
    <property type="evidence" value="ECO:0007669"/>
    <property type="project" value="TreeGrafter"/>
</dbReference>
<dbReference type="GO" id="GO:0006048">
    <property type="term" value="P:UDP-N-acetylglucosamine biosynthetic process"/>
    <property type="evidence" value="ECO:0007669"/>
    <property type="project" value="TreeGrafter"/>
</dbReference>
<dbReference type="CDD" id="cd05802">
    <property type="entry name" value="GlmM"/>
    <property type="match status" value="1"/>
</dbReference>
<dbReference type="FunFam" id="3.30.310.50:FF:000001">
    <property type="entry name" value="Phosphoglucosamine mutase"/>
    <property type="match status" value="1"/>
</dbReference>
<dbReference type="FunFam" id="3.40.120.10:FF:000001">
    <property type="entry name" value="Phosphoglucosamine mutase"/>
    <property type="match status" value="1"/>
</dbReference>
<dbReference type="FunFam" id="3.40.120.10:FF:000002">
    <property type="entry name" value="Phosphoglucosamine mutase"/>
    <property type="match status" value="1"/>
</dbReference>
<dbReference type="Gene3D" id="3.40.120.10">
    <property type="entry name" value="Alpha-D-Glucose-1,6-Bisphosphate, subunit A, domain 3"/>
    <property type="match status" value="3"/>
</dbReference>
<dbReference type="Gene3D" id="3.30.310.50">
    <property type="entry name" value="Alpha-D-phosphohexomutase, C-terminal domain"/>
    <property type="match status" value="1"/>
</dbReference>
<dbReference type="HAMAP" id="MF_01554_B">
    <property type="entry name" value="GlmM_B"/>
    <property type="match status" value="1"/>
</dbReference>
<dbReference type="InterPro" id="IPR005844">
    <property type="entry name" value="A-D-PHexomutase_a/b/a-I"/>
</dbReference>
<dbReference type="InterPro" id="IPR016055">
    <property type="entry name" value="A-D-PHexomutase_a/b/a-I/II/III"/>
</dbReference>
<dbReference type="InterPro" id="IPR005845">
    <property type="entry name" value="A-D-PHexomutase_a/b/a-II"/>
</dbReference>
<dbReference type="InterPro" id="IPR005846">
    <property type="entry name" value="A-D-PHexomutase_a/b/a-III"/>
</dbReference>
<dbReference type="InterPro" id="IPR005843">
    <property type="entry name" value="A-D-PHexomutase_C"/>
</dbReference>
<dbReference type="InterPro" id="IPR036900">
    <property type="entry name" value="A-D-PHexomutase_C_sf"/>
</dbReference>
<dbReference type="InterPro" id="IPR016066">
    <property type="entry name" value="A-D-PHexomutase_CS"/>
</dbReference>
<dbReference type="InterPro" id="IPR005841">
    <property type="entry name" value="Alpha-D-phosphohexomutase_SF"/>
</dbReference>
<dbReference type="InterPro" id="IPR006352">
    <property type="entry name" value="GlmM_bact"/>
</dbReference>
<dbReference type="InterPro" id="IPR050060">
    <property type="entry name" value="Phosphoglucosamine_mutase"/>
</dbReference>
<dbReference type="NCBIfam" id="TIGR01455">
    <property type="entry name" value="glmM"/>
    <property type="match status" value="1"/>
</dbReference>
<dbReference type="NCBIfam" id="NF008139">
    <property type="entry name" value="PRK10887.1"/>
    <property type="match status" value="1"/>
</dbReference>
<dbReference type="PANTHER" id="PTHR42946:SF1">
    <property type="entry name" value="PHOSPHOGLUCOMUTASE (ALPHA-D-GLUCOSE-1,6-BISPHOSPHATE-DEPENDENT)"/>
    <property type="match status" value="1"/>
</dbReference>
<dbReference type="PANTHER" id="PTHR42946">
    <property type="entry name" value="PHOSPHOHEXOSE MUTASE"/>
    <property type="match status" value="1"/>
</dbReference>
<dbReference type="Pfam" id="PF02878">
    <property type="entry name" value="PGM_PMM_I"/>
    <property type="match status" value="1"/>
</dbReference>
<dbReference type="Pfam" id="PF02879">
    <property type="entry name" value="PGM_PMM_II"/>
    <property type="match status" value="1"/>
</dbReference>
<dbReference type="Pfam" id="PF02880">
    <property type="entry name" value="PGM_PMM_III"/>
    <property type="match status" value="1"/>
</dbReference>
<dbReference type="Pfam" id="PF00408">
    <property type="entry name" value="PGM_PMM_IV"/>
    <property type="match status" value="1"/>
</dbReference>
<dbReference type="PRINTS" id="PR00509">
    <property type="entry name" value="PGMPMM"/>
</dbReference>
<dbReference type="SUPFAM" id="SSF55957">
    <property type="entry name" value="Phosphoglucomutase, C-terminal domain"/>
    <property type="match status" value="1"/>
</dbReference>
<dbReference type="SUPFAM" id="SSF53738">
    <property type="entry name" value="Phosphoglucomutase, first 3 domains"/>
    <property type="match status" value="3"/>
</dbReference>
<dbReference type="PROSITE" id="PS00710">
    <property type="entry name" value="PGM_PMM"/>
    <property type="match status" value="1"/>
</dbReference>
<protein>
    <recommendedName>
        <fullName evidence="1">Phosphoglucosamine mutase</fullName>
        <ecNumber evidence="1">5.4.2.10</ecNumber>
    </recommendedName>
</protein>
<keyword id="KW-0413">Isomerase</keyword>
<keyword id="KW-0460">Magnesium</keyword>
<keyword id="KW-0479">Metal-binding</keyword>
<keyword id="KW-0597">Phosphoprotein</keyword>
<accession>B1HMT3</accession>
<reference key="1">
    <citation type="journal article" date="2008" name="J. Bacteriol.">
        <title>Complete genome sequence of the mosquitocidal bacterium Bacillus sphaericus C3-41 and comparison with those of closely related Bacillus species.</title>
        <authorList>
            <person name="Hu X."/>
            <person name="Fan W."/>
            <person name="Han B."/>
            <person name="Liu H."/>
            <person name="Zheng D."/>
            <person name="Li Q."/>
            <person name="Dong W."/>
            <person name="Yan J."/>
            <person name="Gao M."/>
            <person name="Berry C."/>
            <person name="Yuan Z."/>
        </authorList>
    </citation>
    <scope>NUCLEOTIDE SEQUENCE [LARGE SCALE GENOMIC DNA]</scope>
    <source>
        <strain>C3-41</strain>
    </source>
</reference>
<feature type="chain" id="PRO_1000201117" description="Phosphoglucosamine mutase">
    <location>
        <begin position="1"/>
        <end position="450"/>
    </location>
</feature>
<feature type="active site" description="Phosphoserine intermediate" evidence="1">
    <location>
        <position position="101"/>
    </location>
</feature>
<feature type="binding site" description="via phosphate group" evidence="1">
    <location>
        <position position="101"/>
    </location>
    <ligand>
        <name>Mg(2+)</name>
        <dbReference type="ChEBI" id="CHEBI:18420"/>
    </ligand>
</feature>
<feature type="binding site" evidence="1">
    <location>
        <position position="241"/>
    </location>
    <ligand>
        <name>Mg(2+)</name>
        <dbReference type="ChEBI" id="CHEBI:18420"/>
    </ligand>
</feature>
<feature type="binding site" evidence="1">
    <location>
        <position position="243"/>
    </location>
    <ligand>
        <name>Mg(2+)</name>
        <dbReference type="ChEBI" id="CHEBI:18420"/>
    </ligand>
</feature>
<feature type="binding site" evidence="1">
    <location>
        <position position="245"/>
    </location>
    <ligand>
        <name>Mg(2+)</name>
        <dbReference type="ChEBI" id="CHEBI:18420"/>
    </ligand>
</feature>
<feature type="modified residue" description="Phosphoserine" evidence="1">
    <location>
        <position position="101"/>
    </location>
</feature>
<proteinExistence type="inferred from homology"/>
<sequence>MGKYFGTDGVRGVANSELTPEFAFKLGRIGGYVLTKDATDRPKVLIGRDTRISGEMLEGALVAGLLSIGVEVMRLGIISTPGVAYLTRIMSADAGVMISASHNPVADNGIKFFGPDGFKLTDAQEEEIEVLLDAQEDTLPRPIGADLGSVSDYFEGGQKYIQYLKQTVDEEFDGIHVALDCAHGATSSLATHLFADLEADISTMGSSPNGLNINDGVGSTHPEGLAKFVLEKDADVGLAFDGDGDRLIAVDENGKIVDGDQIMFIIGKYLNAVGRLKKQTIVSTVMSNMGFYKAVEDNGMQSIQTAVGDRYVVEEMRANDYNLGGEQSGHIVFLDFNTTGDGLLTGIQLVNIMKATGKKLSELAAEMKIYPQRLVNVRVTDKHAVTENTKVAAVIAEVEAAMAGNGRVLVRPSGTEPLVRVMVEAATETACERFVERIADVVRAEMGLTD</sequence>
<name>GLMM_LYSSC</name>